<evidence type="ECO:0000250" key="1"/>
<evidence type="ECO:0000255" key="2"/>
<evidence type="ECO:0000305" key="3"/>
<sequence>MILFITLPLLNVIISGLLSRYIGVNNIKRLNIINLFIILILLIYYYINIIKTDNEYTLKIIEWINIEYLNINYSFNLDLLSITMLIPIILISLIVNIFAWEYMKDDSHNPRFYTYLALFTLFMIILVLGDNYLILFLGWEYIGIASFLLIGFWYNNIDNIKSSLNALFINKIGDIFFIIALIYLIYIYKSLNYSLIFSLVSYINIDINNIIILCLVIAASAKSAQFGLHNWLIWAMAGPTPVSVLLHAATLVIAGIYLLMRSSPILENCPNILLFNLWLGAITSLISGLIAINSNDIKRIIALSTMSQLGIMFISIGLSSYNLTLYHVLCHSLYKALLFICAGTIIHSLNNELQDIRFMGGLLIYMPITYICMLIGSLSLMGLPSLTGYYSKDIIIESSIGIFTISGLIIYWLVVLSSLLTNIYILKLIYYSFINIPQLNKYIYNSLSLNNTYSLPFNFKFNFDKSWMAIICMIILSIGSLFIGYLLQDIYLGQGNSINGLFIYPNNLNLIETHFAINIYYKWIPIFNIFISILLIIYLYEFNYKLLYIYNNPLFYNFYILFNTRFLFDQILNNYIIRYTLYLSKSLNSLLDKGFLYTLGPNGLNYLLNLLSFNIIKFNTHLFNHYLIYISFSLLLFIYLQFDL</sequence>
<comment type="function">
    <text evidence="1">Core subunit of the mitochondrial membrane respiratory chain NADH dehydrogenase (Complex I) that is believed to belong to the minimal assembly required for catalysis. Complex I functions in the transfer of electrons from NADH to the respiratory chain. The immediate electron acceptor for the enzyme is believed to be ubiquinone (By similarity).</text>
</comment>
<comment type="catalytic activity">
    <reaction>
        <text>a ubiquinone + NADH + 5 H(+)(in) = a ubiquinol + NAD(+) + 4 H(+)(out)</text>
        <dbReference type="Rhea" id="RHEA:29091"/>
        <dbReference type="Rhea" id="RHEA-COMP:9565"/>
        <dbReference type="Rhea" id="RHEA-COMP:9566"/>
        <dbReference type="ChEBI" id="CHEBI:15378"/>
        <dbReference type="ChEBI" id="CHEBI:16389"/>
        <dbReference type="ChEBI" id="CHEBI:17976"/>
        <dbReference type="ChEBI" id="CHEBI:57540"/>
        <dbReference type="ChEBI" id="CHEBI:57945"/>
        <dbReference type="EC" id="7.1.1.2"/>
    </reaction>
</comment>
<comment type="subcellular location">
    <subcellularLocation>
        <location evidence="1">Mitochondrion inner membrane</location>
        <topology evidence="1">Multi-pass membrane protein</topology>
    </subcellularLocation>
</comment>
<comment type="similarity">
    <text evidence="3">Belongs to the complex I subunit 5 family.</text>
</comment>
<accession>Q37024</accession>
<organism>
    <name type="scientific">Wickerhamomyces canadensis</name>
    <name type="common">Yeast</name>
    <name type="synonym">Pichia canadensis</name>
    <dbReference type="NCBI Taxonomy" id="1156965"/>
    <lineage>
        <taxon>Eukaryota</taxon>
        <taxon>Fungi</taxon>
        <taxon>Dikarya</taxon>
        <taxon>Ascomycota</taxon>
        <taxon>Saccharomycotina</taxon>
        <taxon>Saccharomycetes</taxon>
        <taxon>Phaffomycetales</taxon>
        <taxon>Wickerhamomycetaceae</taxon>
        <taxon>Wickerhamomyces</taxon>
    </lineage>
</organism>
<feature type="chain" id="PRO_0000118133" description="NADH-ubiquinone oxidoreductase chain 5">
    <location>
        <begin position="1"/>
        <end position="644"/>
    </location>
</feature>
<feature type="transmembrane region" description="Helical" evidence="2">
    <location>
        <begin position="4"/>
        <end position="23"/>
    </location>
</feature>
<feature type="transmembrane region" description="Helical" evidence="2">
    <location>
        <begin position="30"/>
        <end position="49"/>
    </location>
</feature>
<feature type="transmembrane region" description="Helical" evidence="2">
    <location>
        <begin position="78"/>
        <end position="100"/>
    </location>
</feature>
<feature type="transmembrane region" description="Helical" evidence="2">
    <location>
        <begin position="112"/>
        <end position="129"/>
    </location>
</feature>
<feature type="transmembrane region" description="Helical" evidence="2">
    <location>
        <begin position="133"/>
        <end position="155"/>
    </location>
</feature>
<feature type="transmembrane region" description="Helical" evidence="2">
    <location>
        <begin position="167"/>
        <end position="189"/>
    </location>
</feature>
<feature type="transmembrane region" description="Helical" evidence="2">
    <location>
        <begin position="199"/>
        <end position="221"/>
    </location>
</feature>
<feature type="transmembrane region" description="Helical" evidence="2">
    <location>
        <begin position="234"/>
        <end position="256"/>
    </location>
</feature>
<feature type="transmembrane region" description="Helical" evidence="2">
    <location>
        <begin position="271"/>
        <end position="293"/>
    </location>
</feature>
<feature type="transmembrane region" description="Helical" evidence="2">
    <location>
        <begin position="300"/>
        <end position="322"/>
    </location>
</feature>
<feature type="transmembrane region" description="Helical" evidence="2">
    <location>
        <begin position="327"/>
        <end position="349"/>
    </location>
</feature>
<feature type="transmembrane region" description="Helical" evidence="2">
    <location>
        <begin position="361"/>
        <end position="383"/>
    </location>
</feature>
<feature type="transmembrane region" description="Helical" evidence="2">
    <location>
        <begin position="398"/>
        <end position="420"/>
    </location>
</feature>
<feature type="transmembrane region" description="Helical" evidence="2">
    <location>
        <begin position="466"/>
        <end position="488"/>
    </location>
</feature>
<feature type="transmembrane region" description="Helical" evidence="2">
    <location>
        <begin position="517"/>
        <end position="539"/>
    </location>
</feature>
<feature type="transmembrane region" description="Helical" evidence="2">
    <location>
        <begin position="546"/>
        <end position="568"/>
    </location>
</feature>
<feature type="transmembrane region" description="Helical" evidence="2">
    <location>
        <begin position="594"/>
        <end position="616"/>
    </location>
</feature>
<feature type="transmembrane region" description="Helical" evidence="2">
    <location>
        <begin position="623"/>
        <end position="642"/>
    </location>
</feature>
<reference key="1">
    <citation type="journal article" date="1994" name="Mol. Gen. Genet.">
        <title>The mitochondrial genome of yeast Hansenula wingei encodes NADH dehydrogenase subunit genes ND4L and ND5.</title>
        <authorList>
            <person name="Okamoto K."/>
            <person name="Sekito T."/>
            <person name="Yoshida K."/>
        </authorList>
    </citation>
    <scope>NUCLEOTIDE SEQUENCE [LARGE SCALE GENOMIC DNA]</scope>
    <source>
        <strain>21</strain>
    </source>
</reference>
<reference key="2">
    <citation type="journal article" date="1995" name="Curr. Genet.">
        <title>The complete mitochondrial DNA sequence of Hansenula wingei reveals new characteristics of yeast mitochondria.</title>
        <authorList>
            <person name="Sekito T."/>
            <person name="Okamoto K."/>
            <person name="Kitano H."/>
            <person name="Yoshida K."/>
        </authorList>
    </citation>
    <scope>NUCLEOTIDE SEQUENCE [GENOMIC DNA]</scope>
    <source>
        <strain>21</strain>
    </source>
</reference>
<geneLocation type="mitochondrion"/>
<gene>
    <name type="primary">ND5</name>
</gene>
<keyword id="KW-0249">Electron transport</keyword>
<keyword id="KW-0472">Membrane</keyword>
<keyword id="KW-0496">Mitochondrion</keyword>
<keyword id="KW-0999">Mitochondrion inner membrane</keyword>
<keyword id="KW-0520">NAD</keyword>
<keyword id="KW-0679">Respiratory chain</keyword>
<keyword id="KW-1278">Translocase</keyword>
<keyword id="KW-0812">Transmembrane</keyword>
<keyword id="KW-1133">Transmembrane helix</keyword>
<keyword id="KW-0813">Transport</keyword>
<keyword id="KW-0830">Ubiquinone</keyword>
<name>NU5M_WICCA</name>
<dbReference type="EC" id="7.1.1.2"/>
<dbReference type="EMBL" id="D16253">
    <property type="protein sequence ID" value="BAA03779.2"/>
    <property type="molecule type" value="Genomic_DNA"/>
</dbReference>
<dbReference type="EMBL" id="D31785">
    <property type="protein sequence ID" value="BAA06571.2"/>
    <property type="molecule type" value="Genomic_DNA"/>
</dbReference>
<dbReference type="PIR" id="S44478">
    <property type="entry name" value="S44478"/>
</dbReference>
<dbReference type="RefSeq" id="NP_038216.1">
    <property type="nucleotide sequence ID" value="NC_001762.1"/>
</dbReference>
<dbReference type="SMR" id="Q37024"/>
<dbReference type="GeneID" id="800543"/>
<dbReference type="GO" id="GO:0005743">
    <property type="term" value="C:mitochondrial inner membrane"/>
    <property type="evidence" value="ECO:0007669"/>
    <property type="project" value="UniProtKB-SubCell"/>
</dbReference>
<dbReference type="GO" id="GO:0008137">
    <property type="term" value="F:NADH dehydrogenase (ubiquinone) activity"/>
    <property type="evidence" value="ECO:0007669"/>
    <property type="project" value="UniProtKB-EC"/>
</dbReference>
<dbReference type="GO" id="GO:0042773">
    <property type="term" value="P:ATP synthesis coupled electron transport"/>
    <property type="evidence" value="ECO:0007669"/>
    <property type="project" value="InterPro"/>
</dbReference>
<dbReference type="GO" id="GO:0015990">
    <property type="term" value="P:electron transport coupled proton transport"/>
    <property type="evidence" value="ECO:0007669"/>
    <property type="project" value="TreeGrafter"/>
</dbReference>
<dbReference type="InterPro" id="IPR018393">
    <property type="entry name" value="NADHpl_OxRdtase_5_subgr"/>
</dbReference>
<dbReference type="InterPro" id="IPR001750">
    <property type="entry name" value="ND/Mrp_TM"/>
</dbReference>
<dbReference type="InterPro" id="IPR003945">
    <property type="entry name" value="NU5C-like"/>
</dbReference>
<dbReference type="InterPro" id="IPR001516">
    <property type="entry name" value="Proton_antipo_N"/>
</dbReference>
<dbReference type="NCBIfam" id="TIGR01974">
    <property type="entry name" value="NDH_I_L"/>
    <property type="match status" value="1"/>
</dbReference>
<dbReference type="PANTHER" id="PTHR42829">
    <property type="entry name" value="NADH-UBIQUINONE OXIDOREDUCTASE CHAIN 5"/>
    <property type="match status" value="1"/>
</dbReference>
<dbReference type="PANTHER" id="PTHR42829:SF2">
    <property type="entry name" value="NADH-UBIQUINONE OXIDOREDUCTASE CHAIN 5"/>
    <property type="match status" value="1"/>
</dbReference>
<dbReference type="Pfam" id="PF00361">
    <property type="entry name" value="Proton_antipo_M"/>
    <property type="match status" value="1"/>
</dbReference>
<dbReference type="Pfam" id="PF00662">
    <property type="entry name" value="Proton_antipo_N"/>
    <property type="match status" value="1"/>
</dbReference>
<dbReference type="PRINTS" id="PR01434">
    <property type="entry name" value="NADHDHGNASE5"/>
</dbReference>
<dbReference type="PRINTS" id="PR01435">
    <property type="entry name" value="NPOXDRDTASE5"/>
</dbReference>
<proteinExistence type="inferred from homology"/>
<protein>
    <recommendedName>
        <fullName>NADH-ubiquinone oxidoreductase chain 5</fullName>
        <ecNumber>7.1.1.2</ecNumber>
    </recommendedName>
</protein>